<proteinExistence type="inferred from homology"/>
<accession>Q9W7E9</accession>
<evidence type="ECO:0000250" key="1"/>
<evidence type="ECO:0000255" key="2"/>
<evidence type="ECO:0000305" key="3"/>
<comment type="function">
    <text>Somatostatin inhibits the release of somatotropin.</text>
</comment>
<comment type="subcellular location">
    <subcellularLocation>
        <location>Secreted</location>
    </subcellularLocation>
</comment>
<comment type="similarity">
    <text evidence="3">Belongs to the somatostatin family.</text>
</comment>
<protein>
    <recommendedName>
        <fullName>Somatostatin-2</fullName>
    </recommendedName>
    <alternativeName>
        <fullName>PSS2</fullName>
    </alternativeName>
    <alternativeName>
        <fullName>Somatostatin II</fullName>
    </alternativeName>
    <component>
        <recommendedName>
            <fullName>[Pro17]-somatostatin-29</fullName>
        </recommendedName>
    </component>
    <component>
        <recommendedName>
            <fullName>[Pro2]-somatostatin-14</fullName>
        </recommendedName>
    </component>
</protein>
<feature type="signal peptide" evidence="2">
    <location>
        <begin position="1"/>
        <end position="16"/>
    </location>
</feature>
<feature type="propeptide" id="PRO_0000033151" evidence="2">
    <location>
        <begin position="17"/>
        <end position="80"/>
    </location>
</feature>
<feature type="peptide" id="PRO_0000033152" description="[Pro17]-somatostatin-29" evidence="2">
    <location>
        <begin position="81"/>
        <end position="109"/>
    </location>
</feature>
<feature type="peptide" id="PRO_0000033153" description="[Pro2]-somatostatin-14">
    <location>
        <begin position="96"/>
        <end position="109"/>
    </location>
</feature>
<feature type="disulfide bond" evidence="1">
    <location>
        <begin position="98"/>
        <end position="109"/>
    </location>
</feature>
<dbReference type="EMBL" id="AF126244">
    <property type="protein sequence ID" value="AAD39139.1"/>
    <property type="molecule type" value="mRNA"/>
</dbReference>
<dbReference type="GO" id="GO:0005615">
    <property type="term" value="C:extracellular space"/>
    <property type="evidence" value="ECO:0007669"/>
    <property type="project" value="TreeGrafter"/>
</dbReference>
<dbReference type="GO" id="GO:0001664">
    <property type="term" value="F:G protein-coupled receptor binding"/>
    <property type="evidence" value="ECO:0007669"/>
    <property type="project" value="TreeGrafter"/>
</dbReference>
<dbReference type="GO" id="GO:0005184">
    <property type="term" value="F:neuropeptide hormone activity"/>
    <property type="evidence" value="ECO:0007669"/>
    <property type="project" value="TreeGrafter"/>
</dbReference>
<dbReference type="GO" id="GO:0007193">
    <property type="term" value="P:adenylate cyclase-inhibiting G protein-coupled receptor signaling pathway"/>
    <property type="evidence" value="ECO:0007669"/>
    <property type="project" value="TreeGrafter"/>
</dbReference>
<dbReference type="GO" id="GO:0030334">
    <property type="term" value="P:regulation of cell migration"/>
    <property type="evidence" value="ECO:0007669"/>
    <property type="project" value="TreeGrafter"/>
</dbReference>
<dbReference type="InterPro" id="IPR004250">
    <property type="entry name" value="Somatostatin"/>
</dbReference>
<dbReference type="InterPro" id="IPR018142">
    <property type="entry name" value="Somatostatin/Cortistatin_C"/>
</dbReference>
<dbReference type="PANTHER" id="PTHR10558:SF1">
    <property type="entry name" value="CORTISTATIN"/>
    <property type="match status" value="1"/>
</dbReference>
<dbReference type="PANTHER" id="PTHR10558">
    <property type="entry name" value="SOMATOSTATIN"/>
    <property type="match status" value="1"/>
</dbReference>
<dbReference type="Pfam" id="PF03002">
    <property type="entry name" value="Somatostatin"/>
    <property type="match status" value="1"/>
</dbReference>
<dbReference type="PIRSF" id="PIRSF001814">
    <property type="entry name" value="Somatostatin"/>
    <property type="match status" value="1"/>
</dbReference>
<organism>
    <name type="scientific">Protopterus annectens</name>
    <name type="common">African lungfish</name>
    <dbReference type="NCBI Taxonomy" id="7888"/>
    <lineage>
        <taxon>Eukaryota</taxon>
        <taxon>Metazoa</taxon>
        <taxon>Chordata</taxon>
        <taxon>Craniata</taxon>
        <taxon>Vertebrata</taxon>
        <taxon>Euteleostomi</taxon>
        <taxon>Dipnomorpha</taxon>
        <taxon>Ceratodontiformes</taxon>
        <taxon>Lepidosirenoidei</taxon>
        <taxon>Protopteridae</taxon>
        <taxon>Protopterus</taxon>
    </lineage>
</organism>
<keyword id="KW-0165">Cleavage on pair of basic residues</keyword>
<keyword id="KW-1015">Disulfide bond</keyword>
<keyword id="KW-0372">Hormone</keyword>
<keyword id="KW-0964">Secreted</keyword>
<keyword id="KW-0732">Signal</keyword>
<reference key="1">
    <citation type="journal article" date="1999" name="J. Comp. Neurol.">
        <title>Molecular cloning of the cDNAs and distribution of the mRNAs encoding two somatostatin precursors in the African lungfish Protopterus annectens.</title>
        <authorList>
            <person name="Trabucchi M."/>
            <person name="Tostivint H."/>
            <person name="Lihrmann I."/>
            <person name="Jegou S."/>
            <person name="Vallarino M."/>
            <person name="Vaudry H."/>
        </authorList>
    </citation>
    <scope>NUCLEOTIDE SEQUENCE [MRNA]</scope>
</reference>
<gene>
    <name type="primary">sst2</name>
</gene>
<name>SMS2_PROAN</name>
<sequence length="109" mass="12422">MQFLASLVSFLLVVWSVKATALPVEDRLSVHSNRDLTREREEMILKMISGLLDGSDNSLFGGEVTSMDIEEPLENKLEERAAYNALPQLPQRDRKAPCKNFFWKTFTSC</sequence>